<keyword id="KW-1185">Reference proteome</keyword>
<keyword id="KW-0687">Ribonucleoprotein</keyword>
<keyword id="KW-0689">Ribosomal protein</keyword>
<protein>
    <recommendedName>
        <fullName evidence="1">Large ribosomal subunit protein bL28</fullName>
    </recommendedName>
    <alternativeName>
        <fullName evidence="2">50S ribosomal protein L28</fullName>
    </alternativeName>
</protein>
<sequence>MSKKCEICGKGVVFGVQYSHSHRQSKRTWSPNIRKIKAIVKGTPRTIHVCARCLRSGKVQRAI</sequence>
<name>RL28_CLOK5</name>
<proteinExistence type="inferred from homology"/>
<gene>
    <name evidence="1" type="primary">rpmB</name>
    <name type="ordered locus">CKL_1380</name>
</gene>
<feature type="chain" id="PRO_1000079844" description="Large ribosomal subunit protein bL28">
    <location>
        <begin position="1"/>
        <end position="63"/>
    </location>
</feature>
<evidence type="ECO:0000255" key="1">
    <source>
        <dbReference type="HAMAP-Rule" id="MF_00373"/>
    </source>
</evidence>
<evidence type="ECO:0000305" key="2"/>
<organism>
    <name type="scientific">Clostridium kluyveri (strain ATCC 8527 / DSM 555 / NBRC 12016 / NCIMB 10680 / K1)</name>
    <dbReference type="NCBI Taxonomy" id="431943"/>
    <lineage>
        <taxon>Bacteria</taxon>
        <taxon>Bacillati</taxon>
        <taxon>Bacillota</taxon>
        <taxon>Clostridia</taxon>
        <taxon>Eubacteriales</taxon>
        <taxon>Clostridiaceae</taxon>
        <taxon>Clostridium</taxon>
    </lineage>
</organism>
<reference key="1">
    <citation type="journal article" date="2008" name="Proc. Natl. Acad. Sci. U.S.A.">
        <title>The genome of Clostridium kluyveri, a strict anaerobe with unique metabolic features.</title>
        <authorList>
            <person name="Seedorf H."/>
            <person name="Fricke W.F."/>
            <person name="Veith B."/>
            <person name="Brueggemann H."/>
            <person name="Liesegang H."/>
            <person name="Strittmatter A."/>
            <person name="Miethke M."/>
            <person name="Buckel W."/>
            <person name="Hinderberger J."/>
            <person name="Li F."/>
            <person name="Hagemeier C."/>
            <person name="Thauer R.K."/>
            <person name="Gottschalk G."/>
        </authorList>
    </citation>
    <scope>NUCLEOTIDE SEQUENCE [LARGE SCALE GENOMIC DNA]</scope>
    <source>
        <strain>ATCC 8527 / DSM 555 / NBRC 12016 / NCIMB 10680 / K1</strain>
    </source>
</reference>
<comment type="similarity">
    <text evidence="1">Belongs to the bacterial ribosomal protein bL28 family.</text>
</comment>
<accession>A5N7Z1</accession>
<dbReference type="EMBL" id="CP000673">
    <property type="protein sequence ID" value="EDK33422.1"/>
    <property type="molecule type" value="Genomic_DNA"/>
</dbReference>
<dbReference type="RefSeq" id="WP_012101769.1">
    <property type="nucleotide sequence ID" value="NC_009706.1"/>
</dbReference>
<dbReference type="SMR" id="A5N7Z1"/>
<dbReference type="STRING" id="431943.CKL_1380"/>
<dbReference type="KEGG" id="ckl:CKL_1380"/>
<dbReference type="eggNOG" id="COG0227">
    <property type="taxonomic scope" value="Bacteria"/>
</dbReference>
<dbReference type="HOGENOM" id="CLU_064548_7_0_9"/>
<dbReference type="Proteomes" id="UP000002411">
    <property type="component" value="Chromosome"/>
</dbReference>
<dbReference type="GO" id="GO:1990904">
    <property type="term" value="C:ribonucleoprotein complex"/>
    <property type="evidence" value="ECO:0007669"/>
    <property type="project" value="UniProtKB-KW"/>
</dbReference>
<dbReference type="GO" id="GO:0005840">
    <property type="term" value="C:ribosome"/>
    <property type="evidence" value="ECO:0007669"/>
    <property type="project" value="UniProtKB-KW"/>
</dbReference>
<dbReference type="GO" id="GO:0003735">
    <property type="term" value="F:structural constituent of ribosome"/>
    <property type="evidence" value="ECO:0007669"/>
    <property type="project" value="InterPro"/>
</dbReference>
<dbReference type="GO" id="GO:0006412">
    <property type="term" value="P:translation"/>
    <property type="evidence" value="ECO:0007669"/>
    <property type="project" value="UniProtKB-UniRule"/>
</dbReference>
<dbReference type="Gene3D" id="2.30.170.40">
    <property type="entry name" value="Ribosomal protein L28/L24"/>
    <property type="match status" value="1"/>
</dbReference>
<dbReference type="HAMAP" id="MF_00373">
    <property type="entry name" value="Ribosomal_bL28"/>
    <property type="match status" value="1"/>
</dbReference>
<dbReference type="InterPro" id="IPR050096">
    <property type="entry name" value="Bacterial_rp_bL28"/>
</dbReference>
<dbReference type="InterPro" id="IPR026569">
    <property type="entry name" value="Ribosomal_bL28"/>
</dbReference>
<dbReference type="InterPro" id="IPR034704">
    <property type="entry name" value="Ribosomal_bL28/bL31-like_sf"/>
</dbReference>
<dbReference type="InterPro" id="IPR001383">
    <property type="entry name" value="Ribosomal_bL28_bact-type"/>
</dbReference>
<dbReference type="InterPro" id="IPR037147">
    <property type="entry name" value="Ribosomal_bL28_sf"/>
</dbReference>
<dbReference type="NCBIfam" id="TIGR00009">
    <property type="entry name" value="L28"/>
    <property type="match status" value="1"/>
</dbReference>
<dbReference type="PANTHER" id="PTHR39080">
    <property type="entry name" value="50S RIBOSOMAL PROTEIN L28"/>
    <property type="match status" value="1"/>
</dbReference>
<dbReference type="PANTHER" id="PTHR39080:SF1">
    <property type="entry name" value="LARGE RIBOSOMAL SUBUNIT PROTEIN BL28A"/>
    <property type="match status" value="1"/>
</dbReference>
<dbReference type="Pfam" id="PF00830">
    <property type="entry name" value="Ribosomal_L28"/>
    <property type="match status" value="1"/>
</dbReference>
<dbReference type="SUPFAM" id="SSF143800">
    <property type="entry name" value="L28p-like"/>
    <property type="match status" value="1"/>
</dbReference>